<accession>Q91YK8</accession>
<gene>
    <name type="primary">Lypd3</name>
    <name type="synonym">C4.4a</name>
</gene>
<reference key="1">
    <citation type="journal article" date="2004" name="Genome Res.">
        <title>The status, quality, and expansion of the NIH full-length cDNA project: the Mammalian Gene Collection (MGC).</title>
        <authorList>
            <consortium name="The MGC Project Team"/>
        </authorList>
    </citation>
    <scope>NUCLEOTIDE SEQUENCE [LARGE SCALE MRNA]</scope>
    <source>
        <strain>FVB/N</strain>
        <tissue>Mammary tumor</tissue>
    </source>
</reference>
<reference key="2">
    <citation type="journal article" date="2004" name="Biochem. Eng. J.">
        <title>Structural analysis and tissue localization of human C4.4A: a protein homologue of the urokinase receptor.</title>
        <authorList>
            <person name="Hansen L.V."/>
            <person name="Gaardsvoll H."/>
            <person name="Nielsen B.S."/>
            <person name="Lund L.R."/>
            <person name="Danoe K."/>
            <person name="Jensen O.N."/>
            <person name="Ploug M."/>
        </authorList>
    </citation>
    <scope>INDUCTION</scope>
</reference>
<proteinExistence type="evidence at transcript level"/>
<name>LYPD3_MOUSE</name>
<protein>
    <recommendedName>
        <fullName>Ly6/PLAUR domain-containing protein 3</fullName>
    </recommendedName>
    <alternativeName>
        <fullName>GPI-anchored metastasis-associated protein C4.4A homolog</fullName>
    </alternativeName>
</protein>
<feature type="signal peptide" evidence="2">
    <location>
        <begin position="1"/>
        <end position="32"/>
    </location>
</feature>
<feature type="chain" id="PRO_0000226753" description="Ly6/PLAUR domain-containing protein 3">
    <location>
        <begin position="33"/>
        <end position="343"/>
    </location>
</feature>
<feature type="propeptide" id="PRO_0000226754" description="Removed in mature form" evidence="2">
    <location>
        <begin position="344"/>
        <end position="363"/>
    </location>
</feature>
<feature type="domain" description="UPAR/Ly6 1">
    <location>
        <begin position="35"/>
        <end position="128"/>
    </location>
</feature>
<feature type="domain" description="UPAR/Ly6 2">
    <location>
        <begin position="142"/>
        <end position="224"/>
    </location>
</feature>
<feature type="region of interest" description="Disordered" evidence="3">
    <location>
        <begin position="238"/>
        <end position="287"/>
    </location>
</feature>
<feature type="region of interest" description="Disordered" evidence="3">
    <location>
        <begin position="301"/>
        <end position="336"/>
    </location>
</feature>
<feature type="compositionally biased region" description="Pro residues" evidence="3">
    <location>
        <begin position="238"/>
        <end position="248"/>
    </location>
</feature>
<feature type="compositionally biased region" description="Low complexity" evidence="3">
    <location>
        <begin position="249"/>
        <end position="278"/>
    </location>
</feature>
<feature type="compositionally biased region" description="Gly residues" evidence="3">
    <location>
        <begin position="304"/>
        <end position="318"/>
    </location>
</feature>
<feature type="compositionally biased region" description="Basic and acidic residues" evidence="3">
    <location>
        <begin position="320"/>
        <end position="330"/>
    </location>
</feature>
<feature type="lipid moiety-binding region" description="GPI-anchor amidated serine" evidence="2">
    <location>
        <position position="343"/>
    </location>
</feature>
<feature type="glycosylation site" description="N-linked (GlcNAc...) asparagine" evidence="2">
    <location>
        <position position="120"/>
    </location>
</feature>
<feature type="glycosylation site" description="N-linked (GlcNAc...) asparagine" evidence="2">
    <location>
        <position position="131"/>
    </location>
</feature>
<feature type="glycosylation site" description="N-linked (GlcNAc...) asparagine" evidence="2">
    <location>
        <position position="178"/>
    </location>
</feature>
<feature type="glycosylation site" description="N-linked (GlcNAc...) asparagine" evidence="2">
    <location>
        <position position="185"/>
    </location>
</feature>
<organism>
    <name type="scientific">Mus musculus</name>
    <name type="common">Mouse</name>
    <dbReference type="NCBI Taxonomy" id="10090"/>
    <lineage>
        <taxon>Eukaryota</taxon>
        <taxon>Metazoa</taxon>
        <taxon>Chordata</taxon>
        <taxon>Craniata</taxon>
        <taxon>Vertebrata</taxon>
        <taxon>Euteleostomi</taxon>
        <taxon>Mammalia</taxon>
        <taxon>Eutheria</taxon>
        <taxon>Euarchontoglires</taxon>
        <taxon>Glires</taxon>
        <taxon>Rodentia</taxon>
        <taxon>Myomorpha</taxon>
        <taxon>Muroidea</taxon>
        <taxon>Muridae</taxon>
        <taxon>Murinae</taxon>
        <taxon>Mus</taxon>
        <taxon>Mus</taxon>
    </lineage>
</organism>
<dbReference type="EMBL" id="BC016549">
    <property type="protein sequence ID" value="AAH16549.1"/>
    <property type="molecule type" value="mRNA"/>
</dbReference>
<dbReference type="EMBL" id="BC094282">
    <property type="protein sequence ID" value="AAH94282.1"/>
    <property type="molecule type" value="mRNA"/>
</dbReference>
<dbReference type="CCDS" id="CCDS20958.1"/>
<dbReference type="RefSeq" id="NP_598504.1">
    <property type="nucleotide sequence ID" value="NM_133743.1"/>
</dbReference>
<dbReference type="SMR" id="Q91YK8"/>
<dbReference type="FunCoup" id="Q91YK8">
    <property type="interactions" value="902"/>
</dbReference>
<dbReference type="STRING" id="10090.ENSMUSP00000079543"/>
<dbReference type="GlyCosmos" id="Q91YK8">
    <property type="glycosylation" value="4 sites, No reported glycans"/>
</dbReference>
<dbReference type="GlyGen" id="Q91YK8">
    <property type="glycosylation" value="4 sites"/>
</dbReference>
<dbReference type="iPTMnet" id="Q91YK8"/>
<dbReference type="PhosphoSitePlus" id="Q91YK8"/>
<dbReference type="PaxDb" id="10090-ENSMUSP00000079543"/>
<dbReference type="PeptideAtlas" id="Q91YK8"/>
<dbReference type="ProteomicsDB" id="291978"/>
<dbReference type="Antibodypedia" id="45382">
    <property type="antibodies" value="272 antibodies from 28 providers"/>
</dbReference>
<dbReference type="Ensembl" id="ENSMUST00000080718.6">
    <property type="protein sequence ID" value="ENSMUSP00000079543.5"/>
    <property type="gene ID" value="ENSMUSG00000057454.6"/>
</dbReference>
<dbReference type="GeneID" id="72434"/>
<dbReference type="KEGG" id="mmu:72434"/>
<dbReference type="UCSC" id="uc009fqe.1">
    <property type="organism name" value="mouse"/>
</dbReference>
<dbReference type="AGR" id="MGI:1919684"/>
<dbReference type="CTD" id="27076"/>
<dbReference type="MGI" id="MGI:1919684">
    <property type="gene designation" value="Lypd3"/>
</dbReference>
<dbReference type="VEuPathDB" id="HostDB:ENSMUSG00000057454"/>
<dbReference type="eggNOG" id="ENOG502RYZP">
    <property type="taxonomic scope" value="Eukaryota"/>
</dbReference>
<dbReference type="GeneTree" id="ENSGT00940000153599"/>
<dbReference type="HOGENOM" id="CLU_062960_0_0_1"/>
<dbReference type="InParanoid" id="Q91YK8"/>
<dbReference type="OMA" id="VQDELCT"/>
<dbReference type="OrthoDB" id="9834667at2759"/>
<dbReference type="PhylomeDB" id="Q91YK8"/>
<dbReference type="TreeFam" id="TF337983"/>
<dbReference type="Reactome" id="R-MMU-163125">
    <property type="pathway name" value="Post-translational modification: synthesis of GPI-anchored proteins"/>
</dbReference>
<dbReference type="BioGRID-ORCS" id="72434">
    <property type="hits" value="3 hits in 79 CRISPR screens"/>
</dbReference>
<dbReference type="ChiTaRS" id="Lypd3">
    <property type="organism name" value="mouse"/>
</dbReference>
<dbReference type="PRO" id="PR:Q91YK8"/>
<dbReference type="Proteomes" id="UP000000589">
    <property type="component" value="Chromosome 7"/>
</dbReference>
<dbReference type="RNAct" id="Q91YK8">
    <property type="molecule type" value="protein"/>
</dbReference>
<dbReference type="Bgee" id="ENSMUSG00000057454">
    <property type="expression patterns" value="Expressed in lip and 56 other cell types or tissues"/>
</dbReference>
<dbReference type="GO" id="GO:0016020">
    <property type="term" value="C:membrane"/>
    <property type="evidence" value="ECO:0000266"/>
    <property type="project" value="MGI"/>
</dbReference>
<dbReference type="GO" id="GO:0005886">
    <property type="term" value="C:plasma membrane"/>
    <property type="evidence" value="ECO:0007669"/>
    <property type="project" value="UniProtKB-SubCell"/>
</dbReference>
<dbReference type="GO" id="GO:0098552">
    <property type="term" value="C:side of membrane"/>
    <property type="evidence" value="ECO:0007669"/>
    <property type="project" value="UniProtKB-KW"/>
</dbReference>
<dbReference type="GO" id="GO:0043236">
    <property type="term" value="F:laminin binding"/>
    <property type="evidence" value="ECO:0000266"/>
    <property type="project" value="MGI"/>
</dbReference>
<dbReference type="GO" id="GO:0048870">
    <property type="term" value="P:cell motility"/>
    <property type="evidence" value="ECO:0000266"/>
    <property type="project" value="MGI"/>
</dbReference>
<dbReference type="GO" id="GO:0007160">
    <property type="term" value="P:cell-matrix adhesion"/>
    <property type="evidence" value="ECO:0000266"/>
    <property type="project" value="MGI"/>
</dbReference>
<dbReference type="GO" id="GO:0034392">
    <property type="term" value="P:negative regulation of smooth muscle cell apoptotic process"/>
    <property type="evidence" value="ECO:0007669"/>
    <property type="project" value="Ensembl"/>
</dbReference>
<dbReference type="CDD" id="cd23562">
    <property type="entry name" value="TFP_LU_ECD_LYPD3_rpt1"/>
    <property type="match status" value="1"/>
</dbReference>
<dbReference type="CDD" id="cd23563">
    <property type="entry name" value="TFP_LU_ECD_LYPD3_rpt2"/>
    <property type="match status" value="1"/>
</dbReference>
<dbReference type="FunFam" id="2.10.60.10:FF:000016">
    <property type="entry name" value="LY6/PLAUR domain containing 3"/>
    <property type="match status" value="1"/>
</dbReference>
<dbReference type="FunFam" id="2.10.60.10:FF:000017">
    <property type="entry name" value="Ly6/PLAUR domain-containing protein 3"/>
    <property type="match status" value="1"/>
</dbReference>
<dbReference type="Gene3D" id="2.10.60.10">
    <property type="entry name" value="CD59"/>
    <property type="match status" value="2"/>
</dbReference>
<dbReference type="InterPro" id="IPR016054">
    <property type="entry name" value="LY6_UPA_recep-like"/>
</dbReference>
<dbReference type="InterPro" id="IPR045860">
    <property type="entry name" value="Snake_toxin-like_sf"/>
</dbReference>
<dbReference type="PANTHER" id="PTHR10624:SF8">
    <property type="entry name" value="LY6_PLAUR DOMAIN-CONTAINING PROTEIN 3"/>
    <property type="match status" value="1"/>
</dbReference>
<dbReference type="PANTHER" id="PTHR10624">
    <property type="entry name" value="UROKINASE PLASMINOGEN ACTIVATOR SURFACE RECEPTOR-RELATED"/>
    <property type="match status" value="1"/>
</dbReference>
<dbReference type="Pfam" id="PF00021">
    <property type="entry name" value="UPAR_LY6"/>
    <property type="match status" value="2"/>
</dbReference>
<dbReference type="SMART" id="SM00134">
    <property type="entry name" value="LU"/>
    <property type="match status" value="1"/>
</dbReference>
<dbReference type="SUPFAM" id="SSF57302">
    <property type="entry name" value="Snake toxin-like"/>
    <property type="match status" value="2"/>
</dbReference>
<comment type="function">
    <text evidence="1">Supports cell migration. May be involved in tumor progression (By similarity).</text>
</comment>
<comment type="subunit">
    <text evidence="1">Binds laminin-1 and laminin-5. Interacts with LGALS3. Interacts with AGR2 and AGR3 (By similarity).</text>
</comment>
<comment type="subcellular location">
    <subcellularLocation>
        <location evidence="1">Cell membrane</location>
        <topology evidence="1">Lipid-anchor</topology>
        <topology evidence="1">GPI-anchor</topology>
    </subcellularLocation>
</comment>
<comment type="induction">
    <text evidence="4">Up-regulated in suprabasal keratinocytes of hyperplastic skin induced by phorbol-ester.</text>
</comment>
<evidence type="ECO:0000250" key="1"/>
<evidence type="ECO:0000255" key="2"/>
<evidence type="ECO:0000256" key="3">
    <source>
        <dbReference type="SAM" id="MobiDB-lite"/>
    </source>
</evidence>
<evidence type="ECO:0000269" key="4">
    <source>
    </source>
</evidence>
<sequence>MDAARRGDTQPVMWTTGWLLLLPLLLCEGAQALECYSCVQKADDGCSPHRMKTVKCGPGVDVCTEAVGAVETIHGQFSVAVRGCGSGIPGKNDRGLDLHGLLAFFQLQQCSEDRCNAKLNLTLRGLNPAGNESAYEPNGAECYSCVGLSREKCQGSMPPVVNCYNASGRVYKGCFDGNVTLTAANVTVSLPVRGCVQDETCTRDGVTGPGFTLSGSCCQGPRCNADLRNKTYFSPRIPPLVLLPPPTTAAPSTRAQNSSSTTSTAAPTTTTSIIKPTTAQASHTSPHEMDLEVIQEEGASLSGGAAGHGGTAGHGGAAGHQDRSNMEKYPGKGGAQIPAKGGSGTLGSWLSAVLLTVVAGAML</sequence>
<keyword id="KW-1003">Cell membrane</keyword>
<keyword id="KW-0325">Glycoprotein</keyword>
<keyword id="KW-0336">GPI-anchor</keyword>
<keyword id="KW-0449">Lipoprotein</keyword>
<keyword id="KW-0472">Membrane</keyword>
<keyword id="KW-1185">Reference proteome</keyword>
<keyword id="KW-0677">Repeat</keyword>
<keyword id="KW-0732">Signal</keyword>